<sequence>MTTNTHTLQIEEILELLPHRFPFLLVDRVLDFEEGRFLRAVKNVSVNEPFFQGHFPGKPIFPGVLILEAMAQATGILAFKSVGKLEPGELYYFAGIDEARFKRPVVPGDQMIMEVTFEKTRRGLTRFKGVALVDGKVVCEATMMCARSREA</sequence>
<name>FABZ_SHISS</name>
<reference key="1">
    <citation type="journal article" date="2005" name="Nucleic Acids Res.">
        <title>Genome dynamics and diversity of Shigella species, the etiologic agents of bacillary dysentery.</title>
        <authorList>
            <person name="Yang F."/>
            <person name="Yang J."/>
            <person name="Zhang X."/>
            <person name="Chen L."/>
            <person name="Jiang Y."/>
            <person name="Yan Y."/>
            <person name="Tang X."/>
            <person name="Wang J."/>
            <person name="Xiong Z."/>
            <person name="Dong J."/>
            <person name="Xue Y."/>
            <person name="Zhu Y."/>
            <person name="Xu X."/>
            <person name="Sun L."/>
            <person name="Chen S."/>
            <person name="Nie H."/>
            <person name="Peng J."/>
            <person name="Xu J."/>
            <person name="Wang Y."/>
            <person name="Yuan Z."/>
            <person name="Wen Y."/>
            <person name="Yao Z."/>
            <person name="Shen Y."/>
            <person name="Qiang B."/>
            <person name="Hou Y."/>
            <person name="Yu J."/>
            <person name="Jin Q."/>
        </authorList>
    </citation>
    <scope>NUCLEOTIDE SEQUENCE [LARGE SCALE GENOMIC DNA]</scope>
    <source>
        <strain>Ss046</strain>
    </source>
</reference>
<organism>
    <name type="scientific">Shigella sonnei (strain Ss046)</name>
    <dbReference type="NCBI Taxonomy" id="300269"/>
    <lineage>
        <taxon>Bacteria</taxon>
        <taxon>Pseudomonadati</taxon>
        <taxon>Pseudomonadota</taxon>
        <taxon>Gammaproteobacteria</taxon>
        <taxon>Enterobacterales</taxon>
        <taxon>Enterobacteriaceae</taxon>
        <taxon>Shigella</taxon>
    </lineage>
</organism>
<keyword id="KW-0963">Cytoplasm</keyword>
<keyword id="KW-0441">Lipid A biosynthesis</keyword>
<keyword id="KW-0444">Lipid biosynthesis</keyword>
<keyword id="KW-0443">Lipid metabolism</keyword>
<keyword id="KW-0456">Lyase</keyword>
<keyword id="KW-1185">Reference proteome</keyword>
<evidence type="ECO:0000255" key="1">
    <source>
        <dbReference type="HAMAP-Rule" id="MF_00406"/>
    </source>
</evidence>
<accession>Q3Z5H8</accession>
<proteinExistence type="inferred from homology"/>
<comment type="function">
    <text evidence="1">Involved in unsaturated fatty acids biosynthesis. Catalyzes the dehydration of short chain beta-hydroxyacyl-ACPs and long chain saturated and unsaturated beta-hydroxyacyl-ACPs.</text>
</comment>
<comment type="catalytic activity">
    <reaction evidence="1">
        <text>a (3R)-hydroxyacyl-[ACP] = a (2E)-enoyl-[ACP] + H2O</text>
        <dbReference type="Rhea" id="RHEA:13097"/>
        <dbReference type="Rhea" id="RHEA-COMP:9925"/>
        <dbReference type="Rhea" id="RHEA-COMP:9945"/>
        <dbReference type="ChEBI" id="CHEBI:15377"/>
        <dbReference type="ChEBI" id="CHEBI:78784"/>
        <dbReference type="ChEBI" id="CHEBI:78827"/>
        <dbReference type="EC" id="4.2.1.59"/>
    </reaction>
</comment>
<comment type="subunit">
    <text evidence="1">Oligomer.</text>
</comment>
<comment type="subcellular location">
    <subcellularLocation>
        <location evidence="1">Cytoplasm</location>
    </subcellularLocation>
</comment>
<comment type="PTM">
    <text evidence="1">The N-terminus is blocked.</text>
</comment>
<comment type="similarity">
    <text evidence="1">Belongs to the thioester dehydratase family. FabZ subfamily.</text>
</comment>
<feature type="chain" id="PRO_0000230837" description="3-hydroxyacyl-[acyl-carrier-protein] dehydratase FabZ">
    <location>
        <begin position="1"/>
        <end position="151"/>
    </location>
</feature>
<feature type="active site" evidence="1">
    <location>
        <position position="54"/>
    </location>
</feature>
<gene>
    <name evidence="1" type="primary">fabZ</name>
    <name type="ordered locus">SSON_0192</name>
</gene>
<dbReference type="EC" id="4.2.1.59" evidence="1"/>
<dbReference type="EMBL" id="CP000038">
    <property type="protein sequence ID" value="AAZ86984.1"/>
    <property type="molecule type" value="Genomic_DNA"/>
</dbReference>
<dbReference type="RefSeq" id="WP_000210739.1">
    <property type="nucleotide sequence ID" value="NC_007384.1"/>
</dbReference>
<dbReference type="SMR" id="Q3Z5H8"/>
<dbReference type="GeneID" id="93777245"/>
<dbReference type="KEGG" id="ssn:SSON_0192"/>
<dbReference type="HOGENOM" id="CLU_078912_1_0_6"/>
<dbReference type="Proteomes" id="UP000002529">
    <property type="component" value="Chromosome"/>
</dbReference>
<dbReference type="GO" id="GO:0005737">
    <property type="term" value="C:cytoplasm"/>
    <property type="evidence" value="ECO:0007669"/>
    <property type="project" value="UniProtKB-SubCell"/>
</dbReference>
<dbReference type="GO" id="GO:0016020">
    <property type="term" value="C:membrane"/>
    <property type="evidence" value="ECO:0007669"/>
    <property type="project" value="GOC"/>
</dbReference>
<dbReference type="GO" id="GO:0019171">
    <property type="term" value="F:(3R)-hydroxyacyl-[acyl-carrier-protein] dehydratase activity"/>
    <property type="evidence" value="ECO:0007669"/>
    <property type="project" value="UniProtKB-EC"/>
</dbReference>
<dbReference type="GO" id="GO:0006633">
    <property type="term" value="P:fatty acid biosynthetic process"/>
    <property type="evidence" value="ECO:0007669"/>
    <property type="project" value="UniProtKB-UniRule"/>
</dbReference>
<dbReference type="GO" id="GO:0009245">
    <property type="term" value="P:lipid A biosynthetic process"/>
    <property type="evidence" value="ECO:0007669"/>
    <property type="project" value="UniProtKB-UniRule"/>
</dbReference>
<dbReference type="CDD" id="cd01288">
    <property type="entry name" value="FabZ"/>
    <property type="match status" value="1"/>
</dbReference>
<dbReference type="FunFam" id="3.10.129.10:FF:000001">
    <property type="entry name" value="3-hydroxyacyl-[acyl-carrier-protein] dehydratase FabZ"/>
    <property type="match status" value="1"/>
</dbReference>
<dbReference type="Gene3D" id="3.10.129.10">
    <property type="entry name" value="Hotdog Thioesterase"/>
    <property type="match status" value="1"/>
</dbReference>
<dbReference type="HAMAP" id="MF_00406">
    <property type="entry name" value="FabZ"/>
    <property type="match status" value="1"/>
</dbReference>
<dbReference type="InterPro" id="IPR013114">
    <property type="entry name" value="FabA_FabZ"/>
</dbReference>
<dbReference type="InterPro" id="IPR010084">
    <property type="entry name" value="FabZ"/>
</dbReference>
<dbReference type="InterPro" id="IPR029069">
    <property type="entry name" value="HotDog_dom_sf"/>
</dbReference>
<dbReference type="NCBIfam" id="TIGR01750">
    <property type="entry name" value="fabZ"/>
    <property type="match status" value="1"/>
</dbReference>
<dbReference type="NCBIfam" id="NF000582">
    <property type="entry name" value="PRK00006.1"/>
    <property type="match status" value="1"/>
</dbReference>
<dbReference type="PANTHER" id="PTHR30272">
    <property type="entry name" value="3-HYDROXYACYL-[ACYL-CARRIER-PROTEIN] DEHYDRATASE"/>
    <property type="match status" value="1"/>
</dbReference>
<dbReference type="PANTHER" id="PTHR30272:SF1">
    <property type="entry name" value="3-HYDROXYACYL-[ACYL-CARRIER-PROTEIN] DEHYDRATASE"/>
    <property type="match status" value="1"/>
</dbReference>
<dbReference type="Pfam" id="PF07977">
    <property type="entry name" value="FabA"/>
    <property type="match status" value="1"/>
</dbReference>
<dbReference type="SUPFAM" id="SSF54637">
    <property type="entry name" value="Thioesterase/thiol ester dehydrase-isomerase"/>
    <property type="match status" value="1"/>
</dbReference>
<protein>
    <recommendedName>
        <fullName evidence="1">3-hydroxyacyl-[acyl-carrier-protein] dehydratase FabZ</fullName>
        <ecNumber evidence="1">4.2.1.59</ecNumber>
    </recommendedName>
    <alternativeName>
        <fullName evidence="1">(3R)-hydroxymyristoyl-[acyl-carrier-protein] dehydratase</fullName>
        <shortName evidence="1">(3R)-hydroxymyristoyl-ACP dehydrase</shortName>
    </alternativeName>
    <alternativeName>
        <fullName evidence="1">Beta-hydroxyacyl-ACP dehydratase</fullName>
    </alternativeName>
</protein>